<reference key="1">
    <citation type="journal article" date="2005" name="Nat. Genet.">
        <title>The complete genome sequence of Francisella tularensis, the causative agent of tularemia.</title>
        <authorList>
            <person name="Larsson P."/>
            <person name="Oyston P.C.F."/>
            <person name="Chain P."/>
            <person name="Chu M.C."/>
            <person name="Duffield M."/>
            <person name="Fuxelius H.-H."/>
            <person name="Garcia E."/>
            <person name="Haelltorp G."/>
            <person name="Johansson D."/>
            <person name="Isherwood K.E."/>
            <person name="Karp P.D."/>
            <person name="Larsson E."/>
            <person name="Liu Y."/>
            <person name="Michell S."/>
            <person name="Prior J."/>
            <person name="Prior R."/>
            <person name="Malfatti S."/>
            <person name="Sjoestedt A."/>
            <person name="Svensson K."/>
            <person name="Thompson N."/>
            <person name="Vergez L."/>
            <person name="Wagg J.K."/>
            <person name="Wren B.W."/>
            <person name="Lindler L.E."/>
            <person name="Andersson S.G.E."/>
            <person name="Forsman M."/>
            <person name="Titball R.W."/>
        </authorList>
    </citation>
    <scope>NUCLEOTIDE SEQUENCE [LARGE SCALE GENOMIC DNA]</scope>
    <source>
        <strain>SCHU S4 / Schu 4</strain>
    </source>
</reference>
<sequence>MNWEMVIGLEVHIQLSTKSKLFSTSATKYGQHQNTQAAFLDLGLPGTLPVVNKEAIRKAVIFGLAVDAKISKDSFFARKNYFYPDLSKGYQISQSTNPIVQEGRLEIETSKGLKTIRIERAHLEEDAGKSVHGYIAGETGLDYNRAGTPLLEIVTYPDFRSAEEVVAYLKKLHQLVKHLGICDGNMQEGSFRCDVNLSIRPQGQAKFGTRAELKNINSFRFIDKAIEYEYARQVSVLESGGEVVQETRLYDADANETRSMRAKEDAFDYRYFPDPDLLPLVITDEYIESIKKQMPLKSEEREAVYREHLAEQEVEFLLSNLEIADYYDKVAVVIGYKPAYNWITVDLISTLNRAEKEFSSDVVPAEILLEIIANVQKDIISQANAKKVIAEYIDAPSAIEAIIEKLGLKQVSDEGMIRELVQGIIAANPQQAADFKAGKTKLMSFFVGQAMKASKGKANPKQVNQIVQEELNK</sequence>
<comment type="function">
    <text evidence="1">Allows the formation of correctly charged Asn-tRNA(Asn) or Gln-tRNA(Gln) through the transamidation of misacylated Asp-tRNA(Asn) or Glu-tRNA(Gln) in organisms which lack either or both of asparaginyl-tRNA or glutaminyl-tRNA synthetases. The reaction takes place in the presence of glutamine and ATP through an activated phospho-Asp-tRNA(Asn) or phospho-Glu-tRNA(Gln).</text>
</comment>
<comment type="catalytic activity">
    <reaction evidence="1">
        <text>L-glutamyl-tRNA(Gln) + L-glutamine + ATP + H2O = L-glutaminyl-tRNA(Gln) + L-glutamate + ADP + phosphate + H(+)</text>
        <dbReference type="Rhea" id="RHEA:17521"/>
        <dbReference type="Rhea" id="RHEA-COMP:9681"/>
        <dbReference type="Rhea" id="RHEA-COMP:9684"/>
        <dbReference type="ChEBI" id="CHEBI:15377"/>
        <dbReference type="ChEBI" id="CHEBI:15378"/>
        <dbReference type="ChEBI" id="CHEBI:29985"/>
        <dbReference type="ChEBI" id="CHEBI:30616"/>
        <dbReference type="ChEBI" id="CHEBI:43474"/>
        <dbReference type="ChEBI" id="CHEBI:58359"/>
        <dbReference type="ChEBI" id="CHEBI:78520"/>
        <dbReference type="ChEBI" id="CHEBI:78521"/>
        <dbReference type="ChEBI" id="CHEBI:456216"/>
    </reaction>
</comment>
<comment type="catalytic activity">
    <reaction evidence="1">
        <text>L-aspartyl-tRNA(Asn) + L-glutamine + ATP + H2O = L-asparaginyl-tRNA(Asn) + L-glutamate + ADP + phosphate + 2 H(+)</text>
        <dbReference type="Rhea" id="RHEA:14513"/>
        <dbReference type="Rhea" id="RHEA-COMP:9674"/>
        <dbReference type="Rhea" id="RHEA-COMP:9677"/>
        <dbReference type="ChEBI" id="CHEBI:15377"/>
        <dbReference type="ChEBI" id="CHEBI:15378"/>
        <dbReference type="ChEBI" id="CHEBI:29985"/>
        <dbReference type="ChEBI" id="CHEBI:30616"/>
        <dbReference type="ChEBI" id="CHEBI:43474"/>
        <dbReference type="ChEBI" id="CHEBI:58359"/>
        <dbReference type="ChEBI" id="CHEBI:78515"/>
        <dbReference type="ChEBI" id="CHEBI:78516"/>
        <dbReference type="ChEBI" id="CHEBI:456216"/>
    </reaction>
</comment>
<comment type="subunit">
    <text evidence="1">Heterotrimer of A, B and C subunits.</text>
</comment>
<comment type="similarity">
    <text evidence="1">Belongs to the GatB/GatE family. GatB subfamily.</text>
</comment>
<proteinExistence type="inferred from homology"/>
<organism>
    <name type="scientific">Francisella tularensis subsp. tularensis (strain SCHU S4 / Schu 4)</name>
    <dbReference type="NCBI Taxonomy" id="177416"/>
    <lineage>
        <taxon>Bacteria</taxon>
        <taxon>Pseudomonadati</taxon>
        <taxon>Pseudomonadota</taxon>
        <taxon>Gammaproteobacteria</taxon>
        <taxon>Thiotrichales</taxon>
        <taxon>Francisellaceae</taxon>
        <taxon>Francisella</taxon>
    </lineage>
</organism>
<accession>Q5NIP5</accession>
<evidence type="ECO:0000255" key="1">
    <source>
        <dbReference type="HAMAP-Rule" id="MF_00121"/>
    </source>
</evidence>
<gene>
    <name evidence="1" type="primary">gatB</name>
    <name type="ordered locus">FTT_0021</name>
</gene>
<name>GATB_FRATT</name>
<dbReference type="EC" id="6.3.5.-" evidence="1"/>
<dbReference type="EMBL" id="AJ749949">
    <property type="protein sequence ID" value="CAG44654.1"/>
    <property type="molecule type" value="Genomic_DNA"/>
</dbReference>
<dbReference type="RefSeq" id="WP_003017411.1">
    <property type="nucleotide sequence ID" value="NZ_CP010290.1"/>
</dbReference>
<dbReference type="RefSeq" id="YP_169097.1">
    <property type="nucleotide sequence ID" value="NC_006570.2"/>
</dbReference>
<dbReference type="SMR" id="Q5NIP5"/>
<dbReference type="IntAct" id="Q5NIP5">
    <property type="interactions" value="12"/>
</dbReference>
<dbReference type="STRING" id="177416.FTT_0021"/>
<dbReference type="DNASU" id="3191603"/>
<dbReference type="EnsemblBacteria" id="CAG44654">
    <property type="protein sequence ID" value="CAG44654"/>
    <property type="gene ID" value="FTT_0021"/>
</dbReference>
<dbReference type="KEGG" id="ftu:FTT_0021"/>
<dbReference type="eggNOG" id="COG0064">
    <property type="taxonomic scope" value="Bacteria"/>
</dbReference>
<dbReference type="OrthoDB" id="9804078at2"/>
<dbReference type="Proteomes" id="UP000001174">
    <property type="component" value="Chromosome"/>
</dbReference>
<dbReference type="GO" id="GO:0050566">
    <property type="term" value="F:asparaginyl-tRNA synthase (glutamine-hydrolyzing) activity"/>
    <property type="evidence" value="ECO:0007669"/>
    <property type="project" value="RHEA"/>
</dbReference>
<dbReference type="GO" id="GO:0005524">
    <property type="term" value="F:ATP binding"/>
    <property type="evidence" value="ECO:0007669"/>
    <property type="project" value="UniProtKB-KW"/>
</dbReference>
<dbReference type="GO" id="GO:0050567">
    <property type="term" value="F:glutaminyl-tRNA synthase (glutamine-hydrolyzing) activity"/>
    <property type="evidence" value="ECO:0007669"/>
    <property type="project" value="UniProtKB-UniRule"/>
</dbReference>
<dbReference type="GO" id="GO:0070681">
    <property type="term" value="P:glutaminyl-tRNAGln biosynthesis via transamidation"/>
    <property type="evidence" value="ECO:0007669"/>
    <property type="project" value="TreeGrafter"/>
</dbReference>
<dbReference type="GO" id="GO:0006412">
    <property type="term" value="P:translation"/>
    <property type="evidence" value="ECO:0007669"/>
    <property type="project" value="UniProtKB-UniRule"/>
</dbReference>
<dbReference type="FunFam" id="1.10.10.410:FF:000001">
    <property type="entry name" value="Aspartyl/glutamyl-tRNA(Asn/Gln) amidotransferase subunit B"/>
    <property type="match status" value="1"/>
</dbReference>
<dbReference type="Gene3D" id="1.10.10.410">
    <property type="match status" value="1"/>
</dbReference>
<dbReference type="HAMAP" id="MF_00121">
    <property type="entry name" value="GatB"/>
    <property type="match status" value="1"/>
</dbReference>
<dbReference type="InterPro" id="IPR017959">
    <property type="entry name" value="Asn/Gln-tRNA_amidoTrfase_suB/E"/>
</dbReference>
<dbReference type="InterPro" id="IPR006075">
    <property type="entry name" value="Asn/Gln-tRNA_Trfase_suB/E_cat"/>
</dbReference>
<dbReference type="InterPro" id="IPR018027">
    <property type="entry name" value="Asn/Gln_amidotransferase"/>
</dbReference>
<dbReference type="InterPro" id="IPR003789">
    <property type="entry name" value="Asn/Gln_tRNA_amidoTrase-B-like"/>
</dbReference>
<dbReference type="InterPro" id="IPR004413">
    <property type="entry name" value="GatB"/>
</dbReference>
<dbReference type="InterPro" id="IPR023168">
    <property type="entry name" value="GatB_Yqey_C_2"/>
</dbReference>
<dbReference type="InterPro" id="IPR017958">
    <property type="entry name" value="Gln-tRNA_amidoTrfase_suB_CS"/>
</dbReference>
<dbReference type="InterPro" id="IPR014746">
    <property type="entry name" value="Gln_synth/guanido_kin_cat_dom"/>
</dbReference>
<dbReference type="NCBIfam" id="TIGR00133">
    <property type="entry name" value="gatB"/>
    <property type="match status" value="1"/>
</dbReference>
<dbReference type="NCBIfam" id="NF004012">
    <property type="entry name" value="PRK05477.1-2"/>
    <property type="match status" value="1"/>
</dbReference>
<dbReference type="NCBIfam" id="NF004014">
    <property type="entry name" value="PRK05477.1-4"/>
    <property type="match status" value="1"/>
</dbReference>
<dbReference type="PANTHER" id="PTHR11659">
    <property type="entry name" value="GLUTAMYL-TRNA GLN AMIDOTRANSFERASE SUBUNIT B MITOCHONDRIAL AND PROKARYOTIC PET112-RELATED"/>
    <property type="match status" value="1"/>
</dbReference>
<dbReference type="PANTHER" id="PTHR11659:SF0">
    <property type="entry name" value="GLUTAMYL-TRNA(GLN) AMIDOTRANSFERASE SUBUNIT B, MITOCHONDRIAL"/>
    <property type="match status" value="1"/>
</dbReference>
<dbReference type="Pfam" id="PF02934">
    <property type="entry name" value="GatB_N"/>
    <property type="match status" value="1"/>
</dbReference>
<dbReference type="Pfam" id="PF02637">
    <property type="entry name" value="GatB_Yqey"/>
    <property type="match status" value="1"/>
</dbReference>
<dbReference type="SMART" id="SM00845">
    <property type="entry name" value="GatB_Yqey"/>
    <property type="match status" value="1"/>
</dbReference>
<dbReference type="SUPFAM" id="SSF89095">
    <property type="entry name" value="GatB/YqeY motif"/>
    <property type="match status" value="1"/>
</dbReference>
<dbReference type="SUPFAM" id="SSF55931">
    <property type="entry name" value="Glutamine synthetase/guanido kinase"/>
    <property type="match status" value="1"/>
</dbReference>
<dbReference type="PROSITE" id="PS01234">
    <property type="entry name" value="GATB"/>
    <property type="match status" value="1"/>
</dbReference>
<keyword id="KW-0067">ATP-binding</keyword>
<keyword id="KW-0436">Ligase</keyword>
<keyword id="KW-0547">Nucleotide-binding</keyword>
<keyword id="KW-0648">Protein biosynthesis</keyword>
<keyword id="KW-1185">Reference proteome</keyword>
<protein>
    <recommendedName>
        <fullName evidence="1">Aspartyl/glutamyl-tRNA(Asn/Gln) amidotransferase subunit B</fullName>
        <shortName evidence="1">Asp/Glu-ADT subunit B</shortName>
        <ecNumber evidence="1">6.3.5.-</ecNumber>
    </recommendedName>
</protein>
<feature type="chain" id="PRO_0000241224" description="Aspartyl/glutamyl-tRNA(Asn/Gln) amidotransferase subunit B">
    <location>
        <begin position="1"/>
        <end position="473"/>
    </location>
</feature>